<evidence type="ECO:0000255" key="1">
    <source>
        <dbReference type="HAMAP-Rule" id="MF_01013"/>
    </source>
</evidence>
<comment type="function">
    <text evidence="1">IGPS catalyzes the conversion of PRFAR and glutamine to IGP, AICAR and glutamate. The HisF subunit catalyzes the cyclization activity that produces IGP and AICAR from PRFAR using the ammonia provided by the HisH subunit.</text>
</comment>
<comment type="catalytic activity">
    <reaction evidence="1">
        <text>5-[(5-phospho-1-deoxy-D-ribulos-1-ylimino)methylamino]-1-(5-phospho-beta-D-ribosyl)imidazole-4-carboxamide + L-glutamine = D-erythro-1-(imidazol-4-yl)glycerol 3-phosphate + 5-amino-1-(5-phospho-beta-D-ribosyl)imidazole-4-carboxamide + L-glutamate + H(+)</text>
        <dbReference type="Rhea" id="RHEA:24793"/>
        <dbReference type="ChEBI" id="CHEBI:15378"/>
        <dbReference type="ChEBI" id="CHEBI:29985"/>
        <dbReference type="ChEBI" id="CHEBI:58278"/>
        <dbReference type="ChEBI" id="CHEBI:58359"/>
        <dbReference type="ChEBI" id="CHEBI:58475"/>
        <dbReference type="ChEBI" id="CHEBI:58525"/>
        <dbReference type="EC" id="4.3.2.10"/>
    </reaction>
</comment>
<comment type="pathway">
    <text evidence="1">Amino-acid biosynthesis; L-histidine biosynthesis; L-histidine from 5-phospho-alpha-D-ribose 1-diphosphate: step 5/9.</text>
</comment>
<comment type="subunit">
    <text evidence="1">Heterodimer of HisH and HisF.</text>
</comment>
<comment type="subcellular location">
    <subcellularLocation>
        <location evidence="1">Cytoplasm</location>
    </subcellularLocation>
</comment>
<comment type="similarity">
    <text evidence="1">Belongs to the HisA/HisF family.</text>
</comment>
<organism>
    <name type="scientific">Aliivibrio fischeri (strain ATCC 700601 / ES114)</name>
    <name type="common">Vibrio fischeri</name>
    <dbReference type="NCBI Taxonomy" id="312309"/>
    <lineage>
        <taxon>Bacteria</taxon>
        <taxon>Pseudomonadati</taxon>
        <taxon>Pseudomonadota</taxon>
        <taxon>Gammaproteobacteria</taxon>
        <taxon>Vibrionales</taxon>
        <taxon>Vibrionaceae</taxon>
        <taxon>Aliivibrio</taxon>
    </lineage>
</organism>
<feature type="chain" id="PRO_0000142258" description="Imidazole glycerol phosphate synthase subunit HisF">
    <location>
        <begin position="1"/>
        <end position="257"/>
    </location>
</feature>
<feature type="active site" evidence="1">
    <location>
        <position position="11"/>
    </location>
</feature>
<feature type="active site" evidence="1">
    <location>
        <position position="130"/>
    </location>
</feature>
<accession>Q5E633</accession>
<keyword id="KW-0028">Amino-acid biosynthesis</keyword>
<keyword id="KW-0963">Cytoplasm</keyword>
<keyword id="KW-0368">Histidine biosynthesis</keyword>
<keyword id="KW-0456">Lyase</keyword>
<keyword id="KW-1185">Reference proteome</keyword>
<gene>
    <name evidence="1" type="primary">hisF</name>
    <name type="ordered locus">VF_1018</name>
</gene>
<sequence>MLAKRIIPCLDVKDGQVVKGVQFRNHEIIGDIVPLAQRYAEEGADELVFYDITASSDGRVVDKSWVARVAEVIDIPFCVAGGIKTAEDAAKILEFGADKVSINSPALANPELITELADKFGVQCIVVGIDSYFDKDTGKYQVYQFTGDEERTKATKWETKDWVQEVQKRGAGEIVLNMMNQDGVRNGYDLEQLNMVREVCYVPLIASGGAGEMVHFADAYKKTNVDGALAASVFHKQIINIGELKDYLAEQDVEVRR</sequence>
<reference key="1">
    <citation type="journal article" date="2005" name="Proc. Natl. Acad. Sci. U.S.A.">
        <title>Complete genome sequence of Vibrio fischeri: a symbiotic bacterium with pathogenic congeners.</title>
        <authorList>
            <person name="Ruby E.G."/>
            <person name="Urbanowski M."/>
            <person name="Campbell J."/>
            <person name="Dunn A."/>
            <person name="Faini M."/>
            <person name="Gunsalus R."/>
            <person name="Lostroh P."/>
            <person name="Lupp C."/>
            <person name="McCann J."/>
            <person name="Millikan D."/>
            <person name="Schaefer A."/>
            <person name="Stabb E."/>
            <person name="Stevens A."/>
            <person name="Visick K."/>
            <person name="Whistler C."/>
            <person name="Greenberg E.P."/>
        </authorList>
    </citation>
    <scope>NUCLEOTIDE SEQUENCE [LARGE SCALE GENOMIC DNA]</scope>
    <source>
        <strain>ATCC 700601 / ES114</strain>
    </source>
</reference>
<proteinExistence type="inferred from homology"/>
<dbReference type="EC" id="4.3.2.10" evidence="1"/>
<dbReference type="EMBL" id="CP000020">
    <property type="protein sequence ID" value="AAW85513.1"/>
    <property type="molecule type" value="Genomic_DNA"/>
</dbReference>
<dbReference type="RefSeq" id="WP_011261651.1">
    <property type="nucleotide sequence ID" value="NC_006840.2"/>
</dbReference>
<dbReference type="RefSeq" id="YP_204401.1">
    <property type="nucleotide sequence ID" value="NC_006840.2"/>
</dbReference>
<dbReference type="SMR" id="Q5E633"/>
<dbReference type="STRING" id="312309.VF_1018"/>
<dbReference type="EnsemblBacteria" id="AAW85513">
    <property type="protein sequence ID" value="AAW85513"/>
    <property type="gene ID" value="VF_1018"/>
</dbReference>
<dbReference type="GeneID" id="54163690"/>
<dbReference type="KEGG" id="vfi:VF_1018"/>
<dbReference type="PATRIC" id="fig|312309.11.peg.1018"/>
<dbReference type="eggNOG" id="COG0107">
    <property type="taxonomic scope" value="Bacteria"/>
</dbReference>
<dbReference type="HOGENOM" id="CLU_048577_4_0_6"/>
<dbReference type="OrthoDB" id="9781903at2"/>
<dbReference type="UniPathway" id="UPA00031">
    <property type="reaction ID" value="UER00010"/>
</dbReference>
<dbReference type="Proteomes" id="UP000000537">
    <property type="component" value="Chromosome I"/>
</dbReference>
<dbReference type="GO" id="GO:0005737">
    <property type="term" value="C:cytoplasm"/>
    <property type="evidence" value="ECO:0007669"/>
    <property type="project" value="UniProtKB-SubCell"/>
</dbReference>
<dbReference type="GO" id="GO:0000107">
    <property type="term" value="F:imidazoleglycerol-phosphate synthase activity"/>
    <property type="evidence" value="ECO:0007669"/>
    <property type="project" value="UniProtKB-UniRule"/>
</dbReference>
<dbReference type="GO" id="GO:0016829">
    <property type="term" value="F:lyase activity"/>
    <property type="evidence" value="ECO:0007669"/>
    <property type="project" value="UniProtKB-KW"/>
</dbReference>
<dbReference type="GO" id="GO:0000105">
    <property type="term" value="P:L-histidine biosynthetic process"/>
    <property type="evidence" value="ECO:0007669"/>
    <property type="project" value="UniProtKB-UniRule"/>
</dbReference>
<dbReference type="CDD" id="cd04731">
    <property type="entry name" value="HisF"/>
    <property type="match status" value="1"/>
</dbReference>
<dbReference type="FunFam" id="3.20.20.70:FF:000006">
    <property type="entry name" value="Imidazole glycerol phosphate synthase subunit HisF"/>
    <property type="match status" value="1"/>
</dbReference>
<dbReference type="Gene3D" id="3.20.20.70">
    <property type="entry name" value="Aldolase class I"/>
    <property type="match status" value="1"/>
</dbReference>
<dbReference type="HAMAP" id="MF_01013">
    <property type="entry name" value="HisF"/>
    <property type="match status" value="1"/>
</dbReference>
<dbReference type="InterPro" id="IPR013785">
    <property type="entry name" value="Aldolase_TIM"/>
</dbReference>
<dbReference type="InterPro" id="IPR006062">
    <property type="entry name" value="His_biosynth"/>
</dbReference>
<dbReference type="InterPro" id="IPR004651">
    <property type="entry name" value="HisF"/>
</dbReference>
<dbReference type="InterPro" id="IPR050064">
    <property type="entry name" value="IGPS_HisA/HisF"/>
</dbReference>
<dbReference type="InterPro" id="IPR011060">
    <property type="entry name" value="RibuloseP-bd_barrel"/>
</dbReference>
<dbReference type="NCBIfam" id="TIGR00735">
    <property type="entry name" value="hisF"/>
    <property type="match status" value="1"/>
</dbReference>
<dbReference type="PANTHER" id="PTHR21235:SF2">
    <property type="entry name" value="IMIDAZOLE GLYCEROL PHOSPHATE SYNTHASE HISHF"/>
    <property type="match status" value="1"/>
</dbReference>
<dbReference type="PANTHER" id="PTHR21235">
    <property type="entry name" value="IMIDAZOLE GLYCEROL PHOSPHATE SYNTHASE SUBUNIT HISF/H IGP SYNTHASE SUBUNIT HISF/H"/>
    <property type="match status" value="1"/>
</dbReference>
<dbReference type="Pfam" id="PF00977">
    <property type="entry name" value="His_biosynth"/>
    <property type="match status" value="1"/>
</dbReference>
<dbReference type="SUPFAM" id="SSF51366">
    <property type="entry name" value="Ribulose-phoshate binding barrel"/>
    <property type="match status" value="1"/>
</dbReference>
<protein>
    <recommendedName>
        <fullName evidence="1">Imidazole glycerol phosphate synthase subunit HisF</fullName>
        <ecNumber evidence="1">4.3.2.10</ecNumber>
    </recommendedName>
    <alternativeName>
        <fullName evidence="1">IGP synthase cyclase subunit</fullName>
    </alternativeName>
    <alternativeName>
        <fullName evidence="1">IGP synthase subunit HisF</fullName>
    </alternativeName>
    <alternativeName>
        <fullName evidence="1">ImGP synthase subunit HisF</fullName>
        <shortName evidence="1">IGPS subunit HisF</shortName>
    </alternativeName>
</protein>
<name>HIS6_ALIF1</name>